<gene>
    <name evidence="2" type="primary">earP</name>
    <name evidence="4" type="ordered locus">PP_1857</name>
</gene>
<keyword id="KW-0002">3D-structure</keyword>
<keyword id="KW-0328">Glycosyltransferase</keyword>
<keyword id="KW-1185">Reference proteome</keyword>
<keyword id="KW-0808">Transferase</keyword>
<comment type="function">
    <text evidence="1">Protein-arginine rhamnosyltransferase that catalyzes the transfer of a single rhamnose to elongation factor P (EF-P) on 'Lys-32', a modification required for EF-P-dependent rescue of polyproline stalled ribosomes.</text>
</comment>
<comment type="catalytic activity">
    <reaction evidence="1">
        <text>dTDP-beta-L-rhamnose + L-arginyl-[protein] = N(omega)-(alpha-L-rhamnosyl)-L-arginyl-[protein] + dTDP + H(+)</text>
        <dbReference type="Rhea" id="RHEA:66692"/>
        <dbReference type="Rhea" id="RHEA-COMP:10532"/>
        <dbReference type="Rhea" id="RHEA-COMP:17096"/>
        <dbReference type="ChEBI" id="CHEBI:15378"/>
        <dbReference type="ChEBI" id="CHEBI:29965"/>
        <dbReference type="ChEBI" id="CHEBI:57510"/>
        <dbReference type="ChEBI" id="CHEBI:58369"/>
        <dbReference type="ChEBI" id="CHEBI:167445"/>
    </reaction>
    <physiologicalReaction direction="left-to-right" evidence="1">
        <dbReference type="Rhea" id="RHEA:66693"/>
    </physiologicalReaction>
</comment>
<comment type="biophysicochemical properties">
    <kinetics>
        <KM evidence="1">53 uM for dTDP-beta-L-rhamnose</KM>
        <text evidence="1">kcat is 35 min(-1) with dTDP-beta-L-rhamnose substrate.</text>
    </kinetics>
</comment>
<comment type="domain">
    <text evidence="1">Adopts a GT-B fold and acts as an inverting enzyme that converts the beta-configuration in the dTDP-beta-L-rhamnose donor to the alpha configuration in the N-linked (Rha) arginine product.</text>
</comment>
<comment type="similarity">
    <text evidence="3">Belongs to the glycosyltransferase 104 family.</text>
</comment>
<organism>
    <name type="scientific">Pseudomonas putida (strain ATCC 47054 / DSM 6125 / CFBP 8728 / NCIMB 11950 / KT2440)</name>
    <dbReference type="NCBI Taxonomy" id="160488"/>
    <lineage>
        <taxon>Bacteria</taxon>
        <taxon>Pseudomonadati</taxon>
        <taxon>Pseudomonadota</taxon>
        <taxon>Gammaproteobacteria</taxon>
        <taxon>Pseudomonadales</taxon>
        <taxon>Pseudomonadaceae</taxon>
        <taxon>Pseudomonas</taxon>
    </lineage>
</organism>
<evidence type="ECO:0000269" key="1">
    <source>
    </source>
</evidence>
<evidence type="ECO:0000303" key="2">
    <source>
    </source>
</evidence>
<evidence type="ECO:0000305" key="3"/>
<evidence type="ECO:0000312" key="4">
    <source>
        <dbReference type="EMBL" id="AAN67476.1"/>
    </source>
</evidence>
<evidence type="ECO:0007744" key="5">
    <source>
        <dbReference type="PDB" id="5NV8"/>
    </source>
</evidence>
<evidence type="ECO:0007829" key="6">
    <source>
        <dbReference type="PDB" id="5NV8"/>
    </source>
</evidence>
<dbReference type="EC" id="2.4.1.-" evidence="1"/>
<dbReference type="EMBL" id="AE015451">
    <property type="protein sequence ID" value="AAN67476.1"/>
    <property type="molecule type" value="Genomic_DNA"/>
</dbReference>
<dbReference type="RefSeq" id="NP_744012.1">
    <property type="nucleotide sequence ID" value="NC_002947.4"/>
</dbReference>
<dbReference type="RefSeq" id="WP_010952888.1">
    <property type="nucleotide sequence ID" value="NZ_CP169744.1"/>
</dbReference>
<dbReference type="PDB" id="5NV8">
    <property type="method" value="X-ray"/>
    <property type="resolution" value="2.29 A"/>
    <property type="chains" value="A=2-377"/>
</dbReference>
<dbReference type="PDBsum" id="5NV8"/>
<dbReference type="BMRB" id="Q88LS1"/>
<dbReference type="SMR" id="Q88LS1"/>
<dbReference type="STRING" id="160488.PP_1857"/>
<dbReference type="PaxDb" id="160488-PP_1857"/>
<dbReference type="GeneID" id="83681607"/>
<dbReference type="KEGG" id="ppu:PP_1857"/>
<dbReference type="PATRIC" id="fig|160488.4.peg.1958"/>
<dbReference type="eggNOG" id="COG4394">
    <property type="taxonomic scope" value="Bacteria"/>
</dbReference>
<dbReference type="HOGENOM" id="CLU_060250_0_0_6"/>
<dbReference type="OrthoDB" id="209085at2"/>
<dbReference type="PhylomeDB" id="Q88LS1"/>
<dbReference type="BioCyc" id="PPUT160488:G1G01-1961-MONOMER"/>
<dbReference type="Proteomes" id="UP000000556">
    <property type="component" value="Chromosome"/>
</dbReference>
<dbReference type="GO" id="GO:0106361">
    <property type="term" value="F:protein-arginine rhamnosyltransferase activity"/>
    <property type="evidence" value="ECO:0000314"/>
    <property type="project" value="UniProtKB"/>
</dbReference>
<dbReference type="InterPro" id="IPR016633">
    <property type="entry name" value="EarP"/>
</dbReference>
<dbReference type="NCBIfam" id="TIGR03837">
    <property type="entry name" value="efp_Arg_rhamno"/>
    <property type="match status" value="1"/>
</dbReference>
<dbReference type="Pfam" id="PF10093">
    <property type="entry name" value="EarP"/>
    <property type="match status" value="1"/>
</dbReference>
<dbReference type="PIRSF" id="PIRSF015557">
    <property type="entry name" value="UCP015557"/>
    <property type="match status" value="1"/>
</dbReference>
<protein>
    <recommendedName>
        <fullName evidence="3">Protein-arginine rhamnosyltransferase</fullName>
        <ecNumber evidence="1">2.4.1.-</ecNumber>
    </recommendedName>
    <alternativeName>
        <fullName evidence="2">EF-P arginine rhamnosyltransferase</fullName>
    </alternativeName>
</protein>
<accession>Q88LS1</accession>
<sequence>MKATWDIFCSVVDNYGDIGVTWRLARQLVAEHGLAVRLWVDDLNAFTPMCPGADATAAQQWQHGVDVRHWPAAWLPVAPADVVIGAFACQLPAAYVEAMRARPQPPLWLNLEYLSAEDWVEGCHGLPSPQPNGLRKVFFFPGFTDKTGGLLREGSLLARRDGFQQSAEARRAFLQGLGVDLVPGALLISLFAYENPQLGNWLDALATADQPCHLLVPQGRVVAGLSQWLGEGPLHVGDVRTRGALTVQVLPFVSQDDFDRLLWSCDFNAVRGEDSFVRAQWAGQPMLWHIYVQDENAHWEKLEAFLAHYRCGLSDDADAALLGLWRAWNMDFDMGQAWRAARQHWPELQQHARLWGARQAAQPDLATALVHFYRNSL</sequence>
<feature type="chain" id="PRO_0000452682" description="Protein-arginine rhamnosyltransferase">
    <location>
        <begin position="1"/>
        <end position="377"/>
    </location>
</feature>
<feature type="active site" description="Proton acceptor" evidence="1">
    <location>
        <position position="17"/>
    </location>
</feature>
<feature type="active site" evidence="1">
    <location>
        <position position="273"/>
    </location>
</feature>
<feature type="binding site" evidence="1 5">
    <location>
        <position position="15"/>
    </location>
    <ligand>
        <name>dTDP-beta-L-rhamnose</name>
        <dbReference type="ChEBI" id="CHEBI:57510"/>
    </ligand>
</feature>
<feature type="binding site" evidence="1 5">
    <location>
        <position position="193"/>
    </location>
    <ligand>
        <name>dTDP-beta-L-rhamnose</name>
        <dbReference type="ChEBI" id="CHEBI:57510"/>
    </ligand>
</feature>
<feature type="binding site" evidence="1 5">
    <location>
        <position position="255"/>
    </location>
    <ligand>
        <name>dTDP-beta-L-rhamnose</name>
        <dbReference type="ChEBI" id="CHEBI:57510"/>
    </ligand>
</feature>
<feature type="binding site" evidence="1 5">
    <location>
        <begin position="271"/>
        <end position="275"/>
    </location>
    <ligand>
        <name>dTDP-beta-L-rhamnose</name>
        <dbReference type="ChEBI" id="CHEBI:57510"/>
    </ligand>
</feature>
<feature type="mutagenesis site" description="Abolished protein-arginine rhamnosyltransferase activity without affecting substrate-binding." evidence="1">
    <original>D</original>
    <variation>A</variation>
    <location>
        <position position="13"/>
    </location>
</feature>
<feature type="mutagenesis site" description="Strongly reduced protein-arginine rhamnosyltransferase activity." evidence="1">
    <original>D</original>
    <variation>E</variation>
    <location>
        <position position="13"/>
    </location>
</feature>
<feature type="mutagenesis site" description="Abolished protein-arginine rhamnosyltransferase activity without affecting substrate-binding." evidence="1">
    <original>D</original>
    <variation>E</variation>
    <variation>A</variation>
    <location>
        <position position="17"/>
    </location>
</feature>
<feature type="mutagenesis site" description="Reduced protein-arginine rhamnosyltransferase activity." evidence="1">
    <original>F</original>
    <variation>A</variation>
    <location>
        <position position="191"/>
    </location>
</feature>
<feature type="mutagenesis site" description="Reduced protein-arginine rhamnosyltransferase activity." evidence="1">
    <original>Y</original>
    <variation>A</variation>
    <location>
        <position position="193"/>
    </location>
</feature>
<feature type="mutagenesis site" description="Reduced protein-arginine rhamnosyltransferase activity." evidence="1">
    <original>F</original>
    <variation>A</variation>
    <location>
        <position position="252"/>
    </location>
</feature>
<feature type="mutagenesis site" description="Reduced protein-arginine rhamnosyltransferase activity." evidence="1">
    <original>Q</original>
    <variation>A</variation>
    <location>
        <position position="255"/>
    </location>
</feature>
<feature type="mutagenesis site" description="Reduced protein-arginine rhamnosyltransferase activity." evidence="1">
    <original>F</original>
    <variation>A</variation>
    <location>
        <position position="258"/>
    </location>
</feature>
<feature type="mutagenesis site" description="Strongly reduced protein-arginine rhamnosyltransferase activity." evidence="1">
    <original>R</original>
    <variation>A</variation>
    <location>
        <position position="271"/>
    </location>
</feature>
<feature type="mutagenesis site" description="Strongly reduced protein-arginine rhamnosyltransferase activity." evidence="1">
    <original>E</original>
    <variation>D</variation>
    <location>
        <position position="273"/>
    </location>
</feature>
<feature type="mutagenesis site" description="Abolished protein-arginine rhamnosyltransferase activity without affecting substrate-binding." evidence="1">
    <original>E</original>
    <variation>Q</variation>
    <variation>A</variation>
    <location>
        <position position="273"/>
    </location>
</feature>
<feature type="mutagenesis site" description="Reduced protein-arginine rhamnosyltransferase activity." evidence="1">
    <original>D</original>
    <variation>A</variation>
    <location>
        <position position="274"/>
    </location>
</feature>
<feature type="mutagenesis site" description="Reduced protein-arginine rhamnosyltransferase activity." evidence="1">
    <original>S</original>
    <variation>A</variation>
    <location>
        <position position="275"/>
    </location>
</feature>
<feature type="mutagenesis site" description="Strongly reduced protein-arginine rhamnosyltransferase activity." evidence="1">
    <original>Y</original>
    <variation>A</variation>
    <location>
        <position position="291"/>
    </location>
</feature>
<feature type="strand" evidence="6">
    <location>
        <begin position="4"/>
        <end position="7"/>
    </location>
</feature>
<feature type="helix" evidence="6">
    <location>
        <begin position="17"/>
        <end position="30"/>
    </location>
</feature>
<feature type="strand" evidence="6">
    <location>
        <begin position="35"/>
        <end position="38"/>
    </location>
</feature>
<feature type="turn" evidence="6">
    <location>
        <begin position="133"/>
        <end position="135"/>
    </location>
</feature>
<feature type="helix" evidence="6">
    <location>
        <begin position="156"/>
        <end position="164"/>
    </location>
</feature>
<feature type="helix" evidence="6">
    <location>
        <begin position="167"/>
        <end position="176"/>
    </location>
</feature>
<feature type="strand" evidence="6">
    <location>
        <begin position="186"/>
        <end position="190"/>
    </location>
</feature>
<feature type="helix" evidence="6">
    <location>
        <begin position="198"/>
        <end position="207"/>
    </location>
</feature>
<feature type="strand" evidence="6">
    <location>
        <begin position="208"/>
        <end position="210"/>
    </location>
</feature>
<feature type="strand" evidence="6">
    <location>
        <begin position="212"/>
        <end position="219"/>
    </location>
</feature>
<feature type="helix" evidence="6">
    <location>
        <begin position="222"/>
        <end position="229"/>
    </location>
</feature>
<feature type="strand" evidence="6">
    <location>
        <begin position="239"/>
        <end position="242"/>
    </location>
</feature>
<feature type="strand" evidence="6">
    <location>
        <begin position="245"/>
        <end position="250"/>
    </location>
</feature>
<feature type="helix" evidence="6">
    <location>
        <begin position="255"/>
        <end position="264"/>
    </location>
</feature>
<feature type="strand" evidence="6">
    <location>
        <begin position="265"/>
        <end position="271"/>
    </location>
</feature>
<feature type="helix" evidence="6">
    <location>
        <begin position="274"/>
        <end position="282"/>
    </location>
</feature>
<feature type="strand" evidence="6">
    <location>
        <begin position="286"/>
        <end position="289"/>
    </location>
</feature>
<feature type="helix" evidence="6">
    <location>
        <begin position="302"/>
        <end position="309"/>
    </location>
</feature>
<feature type="turn" evidence="6">
    <location>
        <begin position="310"/>
        <end position="312"/>
    </location>
</feature>
<feature type="helix" evidence="6">
    <location>
        <begin position="315"/>
        <end position="330"/>
    </location>
</feature>
<feature type="helix" evidence="6">
    <location>
        <begin position="334"/>
        <end position="342"/>
    </location>
</feature>
<feature type="helix" evidence="6">
    <location>
        <begin position="345"/>
        <end position="360"/>
    </location>
</feature>
<feature type="helix" evidence="6">
    <location>
        <begin position="365"/>
        <end position="374"/>
    </location>
</feature>
<name>EARP_PSEPK</name>
<reference key="1">
    <citation type="journal article" date="2002" name="Environ. Microbiol.">
        <title>Complete genome sequence and comparative analysis of the metabolically versatile Pseudomonas putida KT2440.</title>
        <authorList>
            <person name="Nelson K.E."/>
            <person name="Weinel C."/>
            <person name="Paulsen I.T."/>
            <person name="Dodson R.J."/>
            <person name="Hilbert H."/>
            <person name="Martins dos Santos V.A.P."/>
            <person name="Fouts D.E."/>
            <person name="Gill S.R."/>
            <person name="Pop M."/>
            <person name="Holmes M."/>
            <person name="Brinkac L.M."/>
            <person name="Beanan M.J."/>
            <person name="DeBoy R.T."/>
            <person name="Daugherty S.C."/>
            <person name="Kolonay J.F."/>
            <person name="Madupu R."/>
            <person name="Nelson W.C."/>
            <person name="White O."/>
            <person name="Peterson J.D."/>
            <person name="Khouri H.M."/>
            <person name="Hance I."/>
            <person name="Chris Lee P."/>
            <person name="Holtzapple E.K."/>
            <person name="Scanlan D."/>
            <person name="Tran K."/>
            <person name="Moazzez A."/>
            <person name="Utterback T.R."/>
            <person name="Rizzo M."/>
            <person name="Lee K."/>
            <person name="Kosack D."/>
            <person name="Moestl D."/>
            <person name="Wedler H."/>
            <person name="Lauber J."/>
            <person name="Stjepandic D."/>
            <person name="Hoheisel J."/>
            <person name="Straetz M."/>
            <person name="Heim S."/>
            <person name="Kiewitz C."/>
            <person name="Eisen J.A."/>
            <person name="Timmis K.N."/>
            <person name="Duesterhoeft A."/>
            <person name="Tuemmler B."/>
            <person name="Fraser C.M."/>
        </authorList>
    </citation>
    <scope>NUCLEOTIDE SEQUENCE [LARGE SCALE GENOMIC DNA]</scope>
    <source>
        <strain>ATCC 47054 / DSM 6125 / CFBP 8728 / NCIMB 11950 / KT2440</strain>
    </source>
</reference>
<reference evidence="5" key="2">
    <citation type="journal article" date="2017" name="MBio">
        <title>Structural basis for EarP-mediated arginine glycosylation of translation elongation factor EF-P.</title>
        <authorList>
            <person name="Krafczyk R."/>
            <person name="Macosek J."/>
            <person name="Jagtap P.K.A."/>
            <person name="Gast D."/>
            <person name="Wunder S."/>
            <person name="Mitra P."/>
            <person name="Jha A.K."/>
            <person name="Rohr J."/>
            <person name="Hoffmann-Roder A."/>
            <person name="Jung K."/>
            <person name="Hennig J."/>
            <person name="Lassak J."/>
        </authorList>
    </citation>
    <scope>X-RAY CRYSTALLOGRAPHY (2.29 ANGSTROMS) OF 2-377 IN COMPLEX WITH DTDP-BETA-L-RHAMNOSE</scope>
    <scope>FUNCTION</scope>
    <scope>CATALYTIC ACTIVITY</scope>
    <scope>BIOPHYSICOCHEMICAL PROPERTIES</scope>
    <scope>DOMAIN</scope>
    <scope>ACTIVE SITES</scope>
    <scope>MUTAGENESIS OF ASP-13; ASP-17; PHE-191; TYR-193; PHE-252; GLN-255; PHE-258; ARG-271; GLU-273; ASP-274; SER-275 AND TYR-291</scope>
    <source>
        <strain>ATCC 47054 / DSM 6125 / CFBP 8728 / NCIMB 11950 / KT2440</strain>
    </source>
</reference>
<proteinExistence type="evidence at protein level"/>